<organism>
    <name type="scientific">Mycolicibacterium paratuberculosis (strain ATCC BAA-968 / K-10)</name>
    <name type="common">Mycobacterium paratuberculosis</name>
    <dbReference type="NCBI Taxonomy" id="262316"/>
    <lineage>
        <taxon>Bacteria</taxon>
        <taxon>Bacillati</taxon>
        <taxon>Actinomycetota</taxon>
        <taxon>Actinomycetes</taxon>
        <taxon>Mycobacteriales</taxon>
        <taxon>Mycobacteriaceae</taxon>
        <taxon>Mycobacterium</taxon>
        <taxon>Mycobacterium avium complex (MAC)</taxon>
    </lineage>
</organism>
<gene>
    <name evidence="1" type="primary">rplM</name>
    <name type="ordered locus">MAP_4245</name>
</gene>
<evidence type="ECO:0000255" key="1">
    <source>
        <dbReference type="HAMAP-Rule" id="MF_01366"/>
    </source>
</evidence>
<evidence type="ECO:0000305" key="2"/>
<dbReference type="EMBL" id="AE016958">
    <property type="protein sequence ID" value="AAS06795.1"/>
    <property type="molecule type" value="Genomic_DNA"/>
</dbReference>
<dbReference type="RefSeq" id="WP_003873431.1">
    <property type="nucleotide sequence ID" value="NZ_CP106873.1"/>
</dbReference>
<dbReference type="SMR" id="Q73S31"/>
<dbReference type="STRING" id="262316.MAP_4245"/>
<dbReference type="GeneID" id="75271900"/>
<dbReference type="KEGG" id="mpa:MAP_4245"/>
<dbReference type="eggNOG" id="COG0102">
    <property type="taxonomic scope" value="Bacteria"/>
</dbReference>
<dbReference type="HOGENOM" id="CLU_082184_2_2_11"/>
<dbReference type="Proteomes" id="UP000000580">
    <property type="component" value="Chromosome"/>
</dbReference>
<dbReference type="GO" id="GO:0022625">
    <property type="term" value="C:cytosolic large ribosomal subunit"/>
    <property type="evidence" value="ECO:0007669"/>
    <property type="project" value="TreeGrafter"/>
</dbReference>
<dbReference type="GO" id="GO:0003729">
    <property type="term" value="F:mRNA binding"/>
    <property type="evidence" value="ECO:0007669"/>
    <property type="project" value="TreeGrafter"/>
</dbReference>
<dbReference type="GO" id="GO:0003735">
    <property type="term" value="F:structural constituent of ribosome"/>
    <property type="evidence" value="ECO:0007669"/>
    <property type="project" value="InterPro"/>
</dbReference>
<dbReference type="GO" id="GO:0017148">
    <property type="term" value="P:negative regulation of translation"/>
    <property type="evidence" value="ECO:0007669"/>
    <property type="project" value="TreeGrafter"/>
</dbReference>
<dbReference type="GO" id="GO:0006412">
    <property type="term" value="P:translation"/>
    <property type="evidence" value="ECO:0007669"/>
    <property type="project" value="UniProtKB-UniRule"/>
</dbReference>
<dbReference type="CDD" id="cd00392">
    <property type="entry name" value="Ribosomal_L13"/>
    <property type="match status" value="1"/>
</dbReference>
<dbReference type="FunFam" id="3.90.1180.10:FF:000001">
    <property type="entry name" value="50S ribosomal protein L13"/>
    <property type="match status" value="1"/>
</dbReference>
<dbReference type="Gene3D" id="3.90.1180.10">
    <property type="entry name" value="Ribosomal protein L13"/>
    <property type="match status" value="1"/>
</dbReference>
<dbReference type="HAMAP" id="MF_01366">
    <property type="entry name" value="Ribosomal_uL13"/>
    <property type="match status" value="1"/>
</dbReference>
<dbReference type="InterPro" id="IPR005822">
    <property type="entry name" value="Ribosomal_uL13"/>
</dbReference>
<dbReference type="InterPro" id="IPR005823">
    <property type="entry name" value="Ribosomal_uL13_bac-type"/>
</dbReference>
<dbReference type="InterPro" id="IPR023563">
    <property type="entry name" value="Ribosomal_uL13_CS"/>
</dbReference>
<dbReference type="InterPro" id="IPR036899">
    <property type="entry name" value="Ribosomal_uL13_sf"/>
</dbReference>
<dbReference type="NCBIfam" id="TIGR01066">
    <property type="entry name" value="rplM_bact"/>
    <property type="match status" value="1"/>
</dbReference>
<dbReference type="PANTHER" id="PTHR11545:SF2">
    <property type="entry name" value="LARGE RIBOSOMAL SUBUNIT PROTEIN UL13M"/>
    <property type="match status" value="1"/>
</dbReference>
<dbReference type="PANTHER" id="PTHR11545">
    <property type="entry name" value="RIBOSOMAL PROTEIN L13"/>
    <property type="match status" value="1"/>
</dbReference>
<dbReference type="Pfam" id="PF00572">
    <property type="entry name" value="Ribosomal_L13"/>
    <property type="match status" value="1"/>
</dbReference>
<dbReference type="PIRSF" id="PIRSF002181">
    <property type="entry name" value="Ribosomal_L13"/>
    <property type="match status" value="1"/>
</dbReference>
<dbReference type="SUPFAM" id="SSF52161">
    <property type="entry name" value="Ribosomal protein L13"/>
    <property type="match status" value="1"/>
</dbReference>
<dbReference type="PROSITE" id="PS00783">
    <property type="entry name" value="RIBOSOMAL_L13"/>
    <property type="match status" value="1"/>
</dbReference>
<comment type="function">
    <text evidence="1">This protein is one of the early assembly proteins of the 50S ribosomal subunit, although it is not seen to bind rRNA by itself. It is important during the early stages of 50S assembly.</text>
</comment>
<comment type="subunit">
    <text evidence="1">Part of the 50S ribosomal subunit.</text>
</comment>
<comment type="similarity">
    <text evidence="1">Belongs to the universal ribosomal protein uL13 family.</text>
</comment>
<accession>Q73S31</accession>
<protein>
    <recommendedName>
        <fullName evidence="1">Large ribosomal subunit protein uL13</fullName>
    </recommendedName>
    <alternativeName>
        <fullName evidence="2">50S ribosomal protein L13</fullName>
    </alternativeName>
</protein>
<reference key="1">
    <citation type="journal article" date="2005" name="Proc. Natl. Acad. Sci. U.S.A.">
        <title>The complete genome sequence of Mycobacterium avium subspecies paratuberculosis.</title>
        <authorList>
            <person name="Li L."/>
            <person name="Bannantine J.P."/>
            <person name="Zhang Q."/>
            <person name="Amonsin A."/>
            <person name="May B.J."/>
            <person name="Alt D."/>
            <person name="Banerji N."/>
            <person name="Kanjilal S."/>
            <person name="Kapur V."/>
        </authorList>
    </citation>
    <scope>NUCLEOTIDE SEQUENCE [LARGE SCALE GENOMIC DNA]</scope>
    <source>
        <strain>ATCC BAA-968 / K-10</strain>
    </source>
</reference>
<sequence length="147" mass="16167">MPTYAPKAGDTTRSWYVIDATDVVLGRLAVAAANLLRGKHKPTFAPNVDGGDFVIVVNADKVAFSGQKLDKKLAYRHSGYPGGLRSRTIGELMQKHPDRVVADAIVGMLPKNKLSRQIQRKLRVYAGPEHPHTAQQPIPYEIKQVAQ</sequence>
<name>RL13_MYCPA</name>
<proteinExistence type="inferred from homology"/>
<keyword id="KW-1185">Reference proteome</keyword>
<keyword id="KW-0687">Ribonucleoprotein</keyword>
<keyword id="KW-0689">Ribosomal protein</keyword>
<feature type="chain" id="PRO_0000261752" description="Large ribosomal subunit protein uL13">
    <location>
        <begin position="1"/>
        <end position="147"/>
    </location>
</feature>